<comment type="function">
    <text evidence="1">With S4 and S12 plays an important role in translational accuracy.</text>
</comment>
<comment type="function">
    <text evidence="1">Located at the back of the 30S subunit body where it stabilizes the conformation of the head with respect to the body.</text>
</comment>
<comment type="subunit">
    <text evidence="1">Part of the 30S ribosomal subunit. Contacts proteins S4 and S8.</text>
</comment>
<comment type="domain">
    <text>The N-terminal domain interacts with the head of the 30S subunit; the C-terminal domain interacts with the body and contacts protein S4. The interaction surface between S4 and S5 is involved in control of translational fidelity.</text>
</comment>
<comment type="similarity">
    <text evidence="1">Belongs to the universal ribosomal protein uS5 family.</text>
</comment>
<sequence length="147" mass="15796">MEKYNREEFEEVIVDIGRVTKVVKGGRRFRFTALVIVGNRKGLVGVGYGKAKEVPDAIRKAVDDAFKNIVEVKTKGSTIAHDVEVKYNASRILLKPASEGTGVIAGGSTRPIVELAGIKDILTKSLGSNNSANVVRATIKALTMLKG</sequence>
<dbReference type="EMBL" id="AL111168">
    <property type="protein sequence ID" value="CAL35784.1"/>
    <property type="molecule type" value="Genomic_DNA"/>
</dbReference>
<dbReference type="PIR" id="F81266">
    <property type="entry name" value="F81266"/>
</dbReference>
<dbReference type="RefSeq" id="WP_002779428.1">
    <property type="nucleotide sequence ID" value="NZ_SZUC01000002.1"/>
</dbReference>
<dbReference type="RefSeq" id="YP_002345056.1">
    <property type="nucleotide sequence ID" value="NC_002163.1"/>
</dbReference>
<dbReference type="SMR" id="Q9PLY8"/>
<dbReference type="STRING" id="192222.Cj1690c"/>
<dbReference type="PaxDb" id="192222-Cj1690c"/>
<dbReference type="EnsemblBacteria" id="CAL35784">
    <property type="protein sequence ID" value="CAL35784"/>
    <property type="gene ID" value="Cj1690c"/>
</dbReference>
<dbReference type="GeneID" id="905964"/>
<dbReference type="GeneID" id="98395681"/>
<dbReference type="KEGG" id="cje:Cj1690c"/>
<dbReference type="PATRIC" id="fig|192222.6.peg.1664"/>
<dbReference type="eggNOG" id="COG0098">
    <property type="taxonomic scope" value="Bacteria"/>
</dbReference>
<dbReference type="HOGENOM" id="CLU_065898_2_2_7"/>
<dbReference type="OrthoDB" id="9809045at2"/>
<dbReference type="PRO" id="PR:Q9PLY8"/>
<dbReference type="Proteomes" id="UP000000799">
    <property type="component" value="Chromosome"/>
</dbReference>
<dbReference type="GO" id="GO:0015935">
    <property type="term" value="C:small ribosomal subunit"/>
    <property type="evidence" value="ECO:0007669"/>
    <property type="project" value="InterPro"/>
</dbReference>
<dbReference type="GO" id="GO:0019843">
    <property type="term" value="F:rRNA binding"/>
    <property type="evidence" value="ECO:0007669"/>
    <property type="project" value="UniProtKB-UniRule"/>
</dbReference>
<dbReference type="GO" id="GO:0003735">
    <property type="term" value="F:structural constituent of ribosome"/>
    <property type="evidence" value="ECO:0007669"/>
    <property type="project" value="InterPro"/>
</dbReference>
<dbReference type="GO" id="GO:0006412">
    <property type="term" value="P:translation"/>
    <property type="evidence" value="ECO:0007669"/>
    <property type="project" value="UniProtKB-UniRule"/>
</dbReference>
<dbReference type="FunFam" id="3.30.160.20:FF:000001">
    <property type="entry name" value="30S ribosomal protein S5"/>
    <property type="match status" value="1"/>
</dbReference>
<dbReference type="FunFam" id="3.30.230.10:FF:000024">
    <property type="entry name" value="30S ribosomal protein S5"/>
    <property type="match status" value="1"/>
</dbReference>
<dbReference type="Gene3D" id="3.30.160.20">
    <property type="match status" value="1"/>
</dbReference>
<dbReference type="Gene3D" id="3.30.230.10">
    <property type="match status" value="1"/>
</dbReference>
<dbReference type="HAMAP" id="MF_01307_B">
    <property type="entry name" value="Ribosomal_uS5_B"/>
    <property type="match status" value="1"/>
</dbReference>
<dbReference type="InterPro" id="IPR020568">
    <property type="entry name" value="Ribosomal_Su5_D2-typ_SF"/>
</dbReference>
<dbReference type="InterPro" id="IPR000851">
    <property type="entry name" value="Ribosomal_uS5"/>
</dbReference>
<dbReference type="InterPro" id="IPR005712">
    <property type="entry name" value="Ribosomal_uS5_bac-type"/>
</dbReference>
<dbReference type="InterPro" id="IPR005324">
    <property type="entry name" value="Ribosomal_uS5_C"/>
</dbReference>
<dbReference type="InterPro" id="IPR013810">
    <property type="entry name" value="Ribosomal_uS5_N"/>
</dbReference>
<dbReference type="InterPro" id="IPR018192">
    <property type="entry name" value="Ribosomal_uS5_N_CS"/>
</dbReference>
<dbReference type="InterPro" id="IPR014721">
    <property type="entry name" value="Ribsml_uS5_D2-typ_fold_subgr"/>
</dbReference>
<dbReference type="NCBIfam" id="TIGR01021">
    <property type="entry name" value="rpsE_bact"/>
    <property type="match status" value="1"/>
</dbReference>
<dbReference type="PANTHER" id="PTHR48277">
    <property type="entry name" value="MITOCHONDRIAL RIBOSOMAL PROTEIN S5"/>
    <property type="match status" value="1"/>
</dbReference>
<dbReference type="PANTHER" id="PTHR48277:SF1">
    <property type="entry name" value="MITOCHONDRIAL RIBOSOMAL PROTEIN S5"/>
    <property type="match status" value="1"/>
</dbReference>
<dbReference type="Pfam" id="PF00333">
    <property type="entry name" value="Ribosomal_S5"/>
    <property type="match status" value="1"/>
</dbReference>
<dbReference type="Pfam" id="PF03719">
    <property type="entry name" value="Ribosomal_S5_C"/>
    <property type="match status" value="1"/>
</dbReference>
<dbReference type="SUPFAM" id="SSF54768">
    <property type="entry name" value="dsRNA-binding domain-like"/>
    <property type="match status" value="1"/>
</dbReference>
<dbReference type="SUPFAM" id="SSF54211">
    <property type="entry name" value="Ribosomal protein S5 domain 2-like"/>
    <property type="match status" value="1"/>
</dbReference>
<dbReference type="PROSITE" id="PS00585">
    <property type="entry name" value="RIBOSOMAL_S5"/>
    <property type="match status" value="1"/>
</dbReference>
<dbReference type="PROSITE" id="PS50881">
    <property type="entry name" value="S5_DSRBD"/>
    <property type="match status" value="1"/>
</dbReference>
<name>RS5_CAMJE</name>
<reference key="1">
    <citation type="journal article" date="2000" name="Nature">
        <title>The genome sequence of the food-borne pathogen Campylobacter jejuni reveals hypervariable sequences.</title>
        <authorList>
            <person name="Parkhill J."/>
            <person name="Wren B.W."/>
            <person name="Mungall K.L."/>
            <person name="Ketley J.M."/>
            <person name="Churcher C.M."/>
            <person name="Basham D."/>
            <person name="Chillingworth T."/>
            <person name="Davies R.M."/>
            <person name="Feltwell T."/>
            <person name="Holroyd S."/>
            <person name="Jagels K."/>
            <person name="Karlyshev A.V."/>
            <person name="Moule S."/>
            <person name="Pallen M.J."/>
            <person name="Penn C.W."/>
            <person name="Quail M.A."/>
            <person name="Rajandream M.A."/>
            <person name="Rutherford K.M."/>
            <person name="van Vliet A.H.M."/>
            <person name="Whitehead S."/>
            <person name="Barrell B.G."/>
        </authorList>
    </citation>
    <scope>NUCLEOTIDE SEQUENCE [LARGE SCALE GENOMIC DNA]</scope>
    <source>
        <strain>ATCC 700819 / NCTC 11168</strain>
    </source>
</reference>
<proteinExistence type="inferred from homology"/>
<keyword id="KW-1185">Reference proteome</keyword>
<keyword id="KW-0687">Ribonucleoprotein</keyword>
<keyword id="KW-0689">Ribosomal protein</keyword>
<keyword id="KW-0694">RNA-binding</keyword>
<keyword id="KW-0699">rRNA-binding</keyword>
<organism>
    <name type="scientific">Campylobacter jejuni subsp. jejuni serotype O:2 (strain ATCC 700819 / NCTC 11168)</name>
    <dbReference type="NCBI Taxonomy" id="192222"/>
    <lineage>
        <taxon>Bacteria</taxon>
        <taxon>Pseudomonadati</taxon>
        <taxon>Campylobacterota</taxon>
        <taxon>Epsilonproteobacteria</taxon>
        <taxon>Campylobacterales</taxon>
        <taxon>Campylobacteraceae</taxon>
        <taxon>Campylobacter</taxon>
    </lineage>
</organism>
<protein>
    <recommendedName>
        <fullName evidence="1">Small ribosomal subunit protein uS5</fullName>
    </recommendedName>
    <alternativeName>
        <fullName evidence="2">30S ribosomal protein S5</fullName>
    </alternativeName>
</protein>
<accession>Q9PLY8</accession>
<accession>Q0P7U1</accession>
<feature type="chain" id="PRO_0000131491" description="Small ribosomal subunit protein uS5">
    <location>
        <begin position="1"/>
        <end position="147"/>
    </location>
</feature>
<feature type="domain" description="S5 DRBM" evidence="1">
    <location>
        <begin position="9"/>
        <end position="72"/>
    </location>
</feature>
<gene>
    <name evidence="1" type="primary">rpsE</name>
    <name type="ordered locus">Cj1690c</name>
</gene>
<evidence type="ECO:0000255" key="1">
    <source>
        <dbReference type="HAMAP-Rule" id="MF_01307"/>
    </source>
</evidence>
<evidence type="ECO:0000305" key="2"/>